<protein>
    <recommendedName>
        <fullName>Tubulin beta-1 chain</fullName>
    </recommendedName>
    <alternativeName>
        <fullName>Beta-1-tubulin</fullName>
    </alternativeName>
</protein>
<name>TBB1_CAEBR</name>
<comment type="function">
    <text evidence="1 4">Tubulin is the major constituent of microtubules, a cylinder consisting of laterally associated linear protofilaments composed of alpha- and beta-tubulin heterodimers. Microtubules grow by the addition of GTP-tubulin dimers to the microtubule end, where a stabilizing cap forms. Below the cap, tubulin dimers are in GDP-bound state, owing to GTPase activity of alpha-tubulin. Plays a role in mechanosensory transduction (touch sensitivity) (By similarity).</text>
</comment>
<comment type="function">
    <text>Mec-7 beta-tubulin is required for the production of 15-protofilament microtubules.</text>
</comment>
<comment type="cofactor">
    <cofactor evidence="2">
        <name>Mg(2+)</name>
        <dbReference type="ChEBI" id="CHEBI:18420"/>
    </cofactor>
</comment>
<comment type="subunit">
    <text>Dimer of alpha and beta chains. A typical microtubule is a hollow water-filled tube with an outer diameter of 25 nm and an inner diameter of 15 nM. Alpha-beta heterodimers associate head-to-tail to form protofilaments running lengthwise along the microtubule wall with the beta-tubulin subunit facing the microtubule plus end conferring a structural polarity. Microtubules usually have 13 protofilaments but different protofilament numbers can be found in some organisms and specialized cells.</text>
</comment>
<comment type="subcellular location">
    <subcellularLocation>
        <location>Cytoplasm</location>
        <location>Cytoskeleton</location>
    </subcellularLocation>
</comment>
<comment type="tissue specificity">
    <text>Expressed primarily in touch receptor neurons.</text>
</comment>
<comment type="similarity">
    <text evidence="4">Belongs to the tubulin family.</text>
</comment>
<gene>
    <name type="primary">mec-7</name>
    <name type="ORF">CBG16786</name>
</gene>
<dbReference type="EMBL" id="U55260">
    <property type="protein sequence ID" value="AAB01983.1"/>
    <property type="molecule type" value="Genomic_DNA"/>
</dbReference>
<dbReference type="EMBL" id="HE600942">
    <property type="protein sequence ID" value="CAP34659.1"/>
    <property type="molecule type" value="Genomic_DNA"/>
</dbReference>
<dbReference type="SMR" id="Q17299"/>
<dbReference type="FunCoup" id="Q17299">
    <property type="interactions" value="73"/>
</dbReference>
<dbReference type="STRING" id="6238.Q17299"/>
<dbReference type="EnsemblMetazoa" id="CBG16786.1">
    <property type="protein sequence ID" value="CBG16786.1"/>
    <property type="gene ID" value="WBGene00036628"/>
</dbReference>
<dbReference type="KEGG" id="cbr:CBG_16786"/>
<dbReference type="CTD" id="8587099"/>
<dbReference type="WormBase" id="CBG16786">
    <property type="protein sequence ID" value="CBP04002"/>
    <property type="gene ID" value="WBGene00036628"/>
    <property type="gene designation" value="Cbr-mec-7"/>
</dbReference>
<dbReference type="eggNOG" id="KOG1375">
    <property type="taxonomic scope" value="Eukaryota"/>
</dbReference>
<dbReference type="HOGENOM" id="CLU_015718_1_1_1"/>
<dbReference type="InParanoid" id="Q17299"/>
<dbReference type="OMA" id="DQMRSIQ"/>
<dbReference type="OrthoDB" id="6073114at2759"/>
<dbReference type="Proteomes" id="UP000008549">
    <property type="component" value="Unassembled WGS sequence"/>
</dbReference>
<dbReference type="GO" id="GO:0005737">
    <property type="term" value="C:cytoplasm"/>
    <property type="evidence" value="ECO:0000318"/>
    <property type="project" value="GO_Central"/>
</dbReference>
<dbReference type="GO" id="GO:0005874">
    <property type="term" value="C:microtubule"/>
    <property type="evidence" value="ECO:0000318"/>
    <property type="project" value="GO_Central"/>
</dbReference>
<dbReference type="GO" id="GO:0043005">
    <property type="term" value="C:neuron projection"/>
    <property type="evidence" value="ECO:0007669"/>
    <property type="project" value="EnsemblMetazoa"/>
</dbReference>
<dbReference type="GO" id="GO:0043025">
    <property type="term" value="C:neuronal cell body"/>
    <property type="evidence" value="ECO:0007669"/>
    <property type="project" value="EnsemblMetazoa"/>
</dbReference>
<dbReference type="GO" id="GO:0005525">
    <property type="term" value="F:GTP binding"/>
    <property type="evidence" value="ECO:0000318"/>
    <property type="project" value="GO_Central"/>
</dbReference>
<dbReference type="GO" id="GO:0003924">
    <property type="term" value="F:GTPase activity"/>
    <property type="evidence" value="ECO:0007669"/>
    <property type="project" value="InterPro"/>
</dbReference>
<dbReference type="GO" id="GO:0046872">
    <property type="term" value="F:metal ion binding"/>
    <property type="evidence" value="ECO:0007669"/>
    <property type="project" value="UniProtKB-KW"/>
</dbReference>
<dbReference type="GO" id="GO:0005200">
    <property type="term" value="F:structural constituent of cytoskeleton"/>
    <property type="evidence" value="ECO:0000318"/>
    <property type="project" value="GO_Central"/>
</dbReference>
<dbReference type="GO" id="GO:0031122">
    <property type="term" value="P:cytoplasmic microtubule organization"/>
    <property type="evidence" value="ECO:0007669"/>
    <property type="project" value="EnsemblMetazoa"/>
</dbReference>
<dbReference type="GO" id="GO:0050976">
    <property type="term" value="P:detection of mechanical stimulus involved in sensory perception of touch"/>
    <property type="evidence" value="ECO:0007669"/>
    <property type="project" value="EnsemblMetazoa"/>
</dbReference>
<dbReference type="GO" id="GO:0007638">
    <property type="term" value="P:mechanosensory behavior"/>
    <property type="evidence" value="ECO:0007669"/>
    <property type="project" value="EnsemblMetazoa"/>
</dbReference>
<dbReference type="GO" id="GO:0000226">
    <property type="term" value="P:microtubule cytoskeleton organization"/>
    <property type="evidence" value="ECO:0000318"/>
    <property type="project" value="GO_Central"/>
</dbReference>
<dbReference type="GO" id="GO:0000278">
    <property type="term" value="P:mitotic cell cycle"/>
    <property type="evidence" value="ECO:0000318"/>
    <property type="project" value="GO_Central"/>
</dbReference>
<dbReference type="GO" id="GO:1905789">
    <property type="term" value="P:positive regulation of detection of mechanical stimulus involved in sensory perception of touch"/>
    <property type="evidence" value="ECO:0007669"/>
    <property type="project" value="EnsemblMetazoa"/>
</dbReference>
<dbReference type="GO" id="GO:1905792">
    <property type="term" value="P:positive regulation of mechanosensory behavior"/>
    <property type="evidence" value="ECO:0007669"/>
    <property type="project" value="EnsemblMetazoa"/>
</dbReference>
<dbReference type="CDD" id="cd02187">
    <property type="entry name" value="beta_tubulin"/>
    <property type="match status" value="1"/>
</dbReference>
<dbReference type="FunFam" id="1.10.287.600:FF:000002">
    <property type="entry name" value="Tubulin beta chain"/>
    <property type="match status" value="1"/>
</dbReference>
<dbReference type="FunFam" id="3.30.1330.20:FF:000002">
    <property type="entry name" value="Tubulin beta chain"/>
    <property type="match status" value="1"/>
</dbReference>
<dbReference type="FunFam" id="3.40.50.1440:FF:000003">
    <property type="entry name" value="Tubulin beta chain"/>
    <property type="match status" value="1"/>
</dbReference>
<dbReference type="Gene3D" id="1.10.287.600">
    <property type="entry name" value="Helix hairpin bin"/>
    <property type="match status" value="1"/>
</dbReference>
<dbReference type="Gene3D" id="3.30.1330.20">
    <property type="entry name" value="Tubulin/FtsZ, C-terminal domain"/>
    <property type="match status" value="1"/>
</dbReference>
<dbReference type="Gene3D" id="3.40.50.1440">
    <property type="entry name" value="Tubulin/FtsZ, GTPase domain"/>
    <property type="match status" value="1"/>
</dbReference>
<dbReference type="InterPro" id="IPR013838">
    <property type="entry name" value="Beta-tubulin_BS"/>
</dbReference>
<dbReference type="InterPro" id="IPR002453">
    <property type="entry name" value="Beta_tubulin"/>
</dbReference>
<dbReference type="InterPro" id="IPR008280">
    <property type="entry name" value="Tub_FtsZ_C"/>
</dbReference>
<dbReference type="InterPro" id="IPR000217">
    <property type="entry name" value="Tubulin"/>
</dbReference>
<dbReference type="InterPro" id="IPR037103">
    <property type="entry name" value="Tubulin/FtsZ-like_C"/>
</dbReference>
<dbReference type="InterPro" id="IPR018316">
    <property type="entry name" value="Tubulin/FtsZ_2-layer-sand-dom"/>
</dbReference>
<dbReference type="InterPro" id="IPR036525">
    <property type="entry name" value="Tubulin/FtsZ_GTPase_sf"/>
</dbReference>
<dbReference type="InterPro" id="IPR023123">
    <property type="entry name" value="Tubulin_C"/>
</dbReference>
<dbReference type="InterPro" id="IPR017975">
    <property type="entry name" value="Tubulin_CS"/>
</dbReference>
<dbReference type="InterPro" id="IPR003008">
    <property type="entry name" value="Tubulin_FtsZ_GTPase"/>
</dbReference>
<dbReference type="PANTHER" id="PTHR11588">
    <property type="entry name" value="TUBULIN"/>
    <property type="match status" value="1"/>
</dbReference>
<dbReference type="Pfam" id="PF00091">
    <property type="entry name" value="Tubulin"/>
    <property type="match status" value="1"/>
</dbReference>
<dbReference type="Pfam" id="PF03953">
    <property type="entry name" value="Tubulin_C"/>
    <property type="match status" value="1"/>
</dbReference>
<dbReference type="PRINTS" id="PR01163">
    <property type="entry name" value="BETATUBULIN"/>
</dbReference>
<dbReference type="PRINTS" id="PR01161">
    <property type="entry name" value="TUBULIN"/>
</dbReference>
<dbReference type="SMART" id="SM00864">
    <property type="entry name" value="Tubulin"/>
    <property type="match status" value="1"/>
</dbReference>
<dbReference type="SMART" id="SM00865">
    <property type="entry name" value="Tubulin_C"/>
    <property type="match status" value="1"/>
</dbReference>
<dbReference type="SUPFAM" id="SSF55307">
    <property type="entry name" value="Tubulin C-terminal domain-like"/>
    <property type="match status" value="1"/>
</dbReference>
<dbReference type="SUPFAM" id="SSF52490">
    <property type="entry name" value="Tubulin nucleotide-binding domain-like"/>
    <property type="match status" value="1"/>
</dbReference>
<dbReference type="PROSITE" id="PS00227">
    <property type="entry name" value="TUBULIN"/>
    <property type="match status" value="1"/>
</dbReference>
<dbReference type="PROSITE" id="PS00228">
    <property type="entry name" value="TUBULIN_B_AUTOREG"/>
    <property type="match status" value="1"/>
</dbReference>
<feature type="chain" id="PRO_0000048285" description="Tubulin beta-1 chain">
    <location>
        <begin position="1"/>
        <end position="441"/>
    </location>
</feature>
<feature type="binding site" evidence="3">
    <location>
        <position position="11"/>
    </location>
    <ligand>
        <name>GTP</name>
        <dbReference type="ChEBI" id="CHEBI:37565"/>
    </ligand>
</feature>
<feature type="binding site" evidence="2">
    <location>
        <position position="69"/>
    </location>
    <ligand>
        <name>GTP</name>
        <dbReference type="ChEBI" id="CHEBI:37565"/>
    </ligand>
</feature>
<feature type="binding site" evidence="2">
    <location>
        <position position="69"/>
    </location>
    <ligand>
        <name>Mg(2+)</name>
        <dbReference type="ChEBI" id="CHEBI:18420"/>
    </ligand>
</feature>
<feature type="binding site" evidence="3">
    <location>
        <position position="138"/>
    </location>
    <ligand>
        <name>GTP</name>
        <dbReference type="ChEBI" id="CHEBI:37565"/>
    </ligand>
</feature>
<feature type="binding site" evidence="3">
    <location>
        <position position="142"/>
    </location>
    <ligand>
        <name>GTP</name>
        <dbReference type="ChEBI" id="CHEBI:37565"/>
    </ligand>
</feature>
<feature type="binding site" evidence="3">
    <location>
        <position position="143"/>
    </location>
    <ligand>
        <name>GTP</name>
        <dbReference type="ChEBI" id="CHEBI:37565"/>
    </ligand>
</feature>
<feature type="binding site" evidence="3">
    <location>
        <position position="144"/>
    </location>
    <ligand>
        <name>GTP</name>
        <dbReference type="ChEBI" id="CHEBI:37565"/>
    </ligand>
</feature>
<feature type="binding site" evidence="3">
    <location>
        <position position="204"/>
    </location>
    <ligand>
        <name>GTP</name>
        <dbReference type="ChEBI" id="CHEBI:37565"/>
    </ligand>
</feature>
<feature type="binding site" evidence="3">
    <location>
        <position position="226"/>
    </location>
    <ligand>
        <name>GTP</name>
        <dbReference type="ChEBI" id="CHEBI:37565"/>
    </ligand>
</feature>
<reference key="1">
    <citation type="submission" date="1996-06" db="EMBL/GenBank/DDBJ databases">
        <authorList>
            <person name="Duggan A."/>
            <person name="Ma C."/>
            <person name="Chalfie M."/>
        </authorList>
    </citation>
    <scope>NUCLEOTIDE SEQUENCE [GENOMIC DNA]</scope>
</reference>
<reference key="2">
    <citation type="journal article" date="2003" name="PLoS Biol.">
        <title>The genome sequence of Caenorhabditis briggsae: a platform for comparative genomics.</title>
        <authorList>
            <person name="Stein L.D."/>
            <person name="Bao Z."/>
            <person name="Blasiar D."/>
            <person name="Blumenthal T."/>
            <person name="Brent M.R."/>
            <person name="Chen N."/>
            <person name="Chinwalla A."/>
            <person name="Clarke L."/>
            <person name="Clee C."/>
            <person name="Coghlan A."/>
            <person name="Coulson A."/>
            <person name="D'Eustachio P."/>
            <person name="Fitch D.H.A."/>
            <person name="Fulton L.A."/>
            <person name="Fulton R.E."/>
            <person name="Griffiths-Jones S."/>
            <person name="Harris T.W."/>
            <person name="Hillier L.W."/>
            <person name="Kamath R."/>
            <person name="Kuwabara P.E."/>
            <person name="Mardis E.R."/>
            <person name="Marra M.A."/>
            <person name="Miner T.L."/>
            <person name="Minx P."/>
            <person name="Mullikin J.C."/>
            <person name="Plumb R.W."/>
            <person name="Rogers J."/>
            <person name="Schein J.E."/>
            <person name="Sohrmann M."/>
            <person name="Spieth J."/>
            <person name="Stajich J.E."/>
            <person name="Wei C."/>
            <person name="Willey D."/>
            <person name="Wilson R.K."/>
            <person name="Durbin R.M."/>
            <person name="Waterston R.H."/>
        </authorList>
    </citation>
    <scope>NUCLEOTIDE SEQUENCE [LARGE SCALE GENOMIC DNA]</scope>
    <source>
        <strain>AF16</strain>
    </source>
</reference>
<organism>
    <name type="scientific">Caenorhabditis briggsae</name>
    <dbReference type="NCBI Taxonomy" id="6238"/>
    <lineage>
        <taxon>Eukaryota</taxon>
        <taxon>Metazoa</taxon>
        <taxon>Ecdysozoa</taxon>
        <taxon>Nematoda</taxon>
        <taxon>Chromadorea</taxon>
        <taxon>Rhabditida</taxon>
        <taxon>Rhabditina</taxon>
        <taxon>Rhabditomorpha</taxon>
        <taxon>Rhabditoidea</taxon>
        <taxon>Rhabditidae</taxon>
        <taxon>Peloderinae</taxon>
        <taxon>Caenorhabditis</taxon>
    </lineage>
</organism>
<evidence type="ECO:0000250" key="1">
    <source>
        <dbReference type="UniProtKB" id="P12456"/>
    </source>
</evidence>
<evidence type="ECO:0000250" key="2">
    <source>
        <dbReference type="UniProtKB" id="P68363"/>
    </source>
</evidence>
<evidence type="ECO:0000250" key="3">
    <source>
        <dbReference type="UniProtKB" id="Q13509"/>
    </source>
</evidence>
<evidence type="ECO:0000305" key="4"/>
<accession>Q17299</accession>
<accession>A8XPT3</accession>
<proteinExistence type="evidence at transcript level"/>
<keyword id="KW-0963">Cytoplasm</keyword>
<keyword id="KW-0206">Cytoskeleton</keyword>
<keyword id="KW-0342">GTP-binding</keyword>
<keyword id="KW-0460">Magnesium</keyword>
<keyword id="KW-0479">Metal-binding</keyword>
<keyword id="KW-0493">Microtubule</keyword>
<keyword id="KW-0547">Nucleotide-binding</keyword>
<keyword id="KW-1185">Reference proteome</keyword>
<sequence>MREIVHIQAGQCGNQIGSKFWEVISDEHGIDPTGQYVGDSDLQLERINVYYNEAGSNKYVPRAVLVDLEPGTMDSVRSGPFGQLFRPDNYVFGQSGAGNNWAKGHYTEGAELVDNVLDVVRKEAESTDCLQGFQLTHSLGGGTGSGMGTLLISKIREEYPDRIMNTFSVVPSPKVSDTVVEPYNATLSVHQLVENTDETFCIDNEALYDICFRTLKLTTPTYGDLNHLVSATMSGVTTCLRFPGQLNADLRKLAVNMVPFPRLHFFMPGFAPLTSRSNQQYRAITVPELTQQCFDAKNMMAACDPRHGRYLTAAAIFRGRMSMKEVDEQMLNIQNKNSSYFVDWIPNNVKTAVCDIPPRGLKMSATFIGNSTAIQELFKRISEQFTAMFRRKAFLHWYTGEGMDEMEFTEAESNMNDLVSEYQQYQEAAADEDAAEAFDGE</sequence>